<name>FENR_MYCGA</name>
<feature type="chain" id="PRO_0000364882" description="Ferredoxin--NADP reductase">
    <location>
        <begin position="1"/>
        <end position="328"/>
    </location>
</feature>
<feature type="binding site" evidence="1">
    <location>
        <position position="14"/>
    </location>
    <ligand>
        <name>FAD</name>
        <dbReference type="ChEBI" id="CHEBI:57692"/>
    </ligand>
</feature>
<feature type="binding site" evidence="1">
    <location>
        <position position="33"/>
    </location>
    <ligand>
        <name>FAD</name>
        <dbReference type="ChEBI" id="CHEBI:57692"/>
    </ligand>
</feature>
<feature type="binding site" evidence="1">
    <location>
        <position position="41"/>
    </location>
    <ligand>
        <name>FAD</name>
        <dbReference type="ChEBI" id="CHEBI:57692"/>
    </ligand>
</feature>
<feature type="binding site" evidence="1">
    <location>
        <position position="46"/>
    </location>
    <ligand>
        <name>FAD</name>
        <dbReference type="ChEBI" id="CHEBI:57692"/>
    </ligand>
</feature>
<feature type="binding site" evidence="1">
    <location>
        <position position="90"/>
    </location>
    <ligand>
        <name>FAD</name>
        <dbReference type="ChEBI" id="CHEBI:57692"/>
    </ligand>
</feature>
<feature type="binding site" evidence="1">
    <location>
        <position position="126"/>
    </location>
    <ligand>
        <name>FAD</name>
        <dbReference type="ChEBI" id="CHEBI:57692"/>
    </ligand>
</feature>
<accession>Q7NBE9</accession>
<proteinExistence type="inferred from homology"/>
<organism>
    <name type="scientific">Mycoplasmoides gallisepticum (strain R(low / passage 15 / clone 2))</name>
    <name type="common">Mycoplasma gallisepticum</name>
    <dbReference type="NCBI Taxonomy" id="710127"/>
    <lineage>
        <taxon>Bacteria</taxon>
        <taxon>Bacillati</taxon>
        <taxon>Mycoplasmatota</taxon>
        <taxon>Mycoplasmoidales</taxon>
        <taxon>Mycoplasmoidaceae</taxon>
        <taxon>Mycoplasmoides</taxon>
    </lineage>
</organism>
<dbReference type="EC" id="1.18.1.2" evidence="1"/>
<dbReference type="EMBL" id="AE015450">
    <property type="protein sequence ID" value="AAP56680.1"/>
    <property type="molecule type" value="Genomic_DNA"/>
</dbReference>
<dbReference type="RefSeq" id="WP_011113571.1">
    <property type="nucleotide sequence ID" value="NC_004829.2"/>
</dbReference>
<dbReference type="SMR" id="Q7NBE9"/>
<dbReference type="KEGG" id="mga:MGA_1221"/>
<dbReference type="PATRIC" id="fig|233150.7.peg.366"/>
<dbReference type="HOGENOM" id="CLU_031864_5_5_14"/>
<dbReference type="OrthoDB" id="9806179at2"/>
<dbReference type="Proteomes" id="UP000001418">
    <property type="component" value="Chromosome"/>
</dbReference>
<dbReference type="GO" id="GO:0004324">
    <property type="term" value="F:ferredoxin-NADP+ reductase activity"/>
    <property type="evidence" value="ECO:0007669"/>
    <property type="project" value="UniProtKB-UniRule"/>
</dbReference>
<dbReference type="GO" id="GO:0050660">
    <property type="term" value="F:flavin adenine dinucleotide binding"/>
    <property type="evidence" value="ECO:0007669"/>
    <property type="project" value="UniProtKB-UniRule"/>
</dbReference>
<dbReference type="GO" id="GO:0050661">
    <property type="term" value="F:NADP binding"/>
    <property type="evidence" value="ECO:0007669"/>
    <property type="project" value="UniProtKB-UniRule"/>
</dbReference>
<dbReference type="Gene3D" id="3.50.50.60">
    <property type="entry name" value="FAD/NAD(P)-binding domain"/>
    <property type="match status" value="2"/>
</dbReference>
<dbReference type="HAMAP" id="MF_01685">
    <property type="entry name" value="FENR2"/>
    <property type="match status" value="1"/>
</dbReference>
<dbReference type="InterPro" id="IPR036188">
    <property type="entry name" value="FAD/NAD-bd_sf"/>
</dbReference>
<dbReference type="InterPro" id="IPR023753">
    <property type="entry name" value="FAD/NAD-binding_dom"/>
</dbReference>
<dbReference type="InterPro" id="IPR022890">
    <property type="entry name" value="Fd--NADP_Rdtase_type_2"/>
</dbReference>
<dbReference type="InterPro" id="IPR050097">
    <property type="entry name" value="Ferredoxin-NADP_redctase_2"/>
</dbReference>
<dbReference type="PANTHER" id="PTHR48105">
    <property type="entry name" value="THIOREDOXIN REDUCTASE 1-RELATED-RELATED"/>
    <property type="match status" value="1"/>
</dbReference>
<dbReference type="Pfam" id="PF07992">
    <property type="entry name" value="Pyr_redox_2"/>
    <property type="match status" value="1"/>
</dbReference>
<dbReference type="PRINTS" id="PR00368">
    <property type="entry name" value="FADPNR"/>
</dbReference>
<dbReference type="PRINTS" id="PR00469">
    <property type="entry name" value="PNDRDTASEII"/>
</dbReference>
<dbReference type="SUPFAM" id="SSF51905">
    <property type="entry name" value="FAD/NAD(P)-binding domain"/>
    <property type="match status" value="1"/>
</dbReference>
<evidence type="ECO:0000255" key="1">
    <source>
        <dbReference type="HAMAP-Rule" id="MF_01685"/>
    </source>
</evidence>
<sequence>MNIYDLIVLGAGTSGIYCASYGAMKGLSSLVIEMTDRIGGQPAHVYPFKKIYDFPTANGILAKDFVDQLYQQQKPYITQGLITYLHNTTIQEQNYLDDQQLFELKLSDNQHVKAKKIILATGNGGFEPIKLKDELIQDQNLDCIHYKINDLTQYQNKDLCFLGGGDSAVELINQLADLKIAKSLSIIHRNHKYRAAQALVDLINKKPINQYLDQTIELIKDNKISFKDNQSGESTQLNFDYLIVQYGLKPLKSLECFDHLEQDLNNNFVINHHHQTSDPNIYAIGLASNFSKRPNLILSGMYEATVAIKHINDTINPYLRATDYLLKE</sequence>
<protein>
    <recommendedName>
        <fullName evidence="1">Ferredoxin--NADP reductase</fullName>
        <shortName evidence="1">FNR</shortName>
        <shortName evidence="1">Fd-NADP(+) reductase</shortName>
        <ecNumber evidence="1">1.18.1.2</ecNumber>
    </recommendedName>
</protein>
<gene>
    <name type="ordered locus">MYCGA3300</name>
    <name type="ORF">MGA_1221</name>
</gene>
<keyword id="KW-0274">FAD</keyword>
<keyword id="KW-0285">Flavoprotein</keyword>
<keyword id="KW-0521">NADP</keyword>
<keyword id="KW-0560">Oxidoreductase</keyword>
<keyword id="KW-1185">Reference proteome</keyword>
<comment type="catalytic activity">
    <reaction evidence="1">
        <text>2 reduced [2Fe-2S]-[ferredoxin] + NADP(+) + H(+) = 2 oxidized [2Fe-2S]-[ferredoxin] + NADPH</text>
        <dbReference type="Rhea" id="RHEA:20125"/>
        <dbReference type="Rhea" id="RHEA-COMP:10000"/>
        <dbReference type="Rhea" id="RHEA-COMP:10001"/>
        <dbReference type="ChEBI" id="CHEBI:15378"/>
        <dbReference type="ChEBI" id="CHEBI:33737"/>
        <dbReference type="ChEBI" id="CHEBI:33738"/>
        <dbReference type="ChEBI" id="CHEBI:57783"/>
        <dbReference type="ChEBI" id="CHEBI:58349"/>
        <dbReference type="EC" id="1.18.1.2"/>
    </reaction>
</comment>
<comment type="cofactor">
    <cofactor evidence="1">
        <name>FAD</name>
        <dbReference type="ChEBI" id="CHEBI:57692"/>
    </cofactor>
    <text evidence="1">Binds 1 FAD per subunit.</text>
</comment>
<comment type="subunit">
    <text evidence="1">Homodimer.</text>
</comment>
<comment type="similarity">
    <text evidence="1">Belongs to the ferredoxin--NADP reductase type 2 family.</text>
</comment>
<reference key="1">
    <citation type="journal article" date="2003" name="Microbiology">
        <title>The complete genome sequence of the avian pathogen Mycoplasma gallisepticum strain R(low).</title>
        <authorList>
            <person name="Papazisi L."/>
            <person name="Gorton T.S."/>
            <person name="Kutish G."/>
            <person name="Markham P.F."/>
            <person name="Browning G.F."/>
            <person name="Nguyen D.K."/>
            <person name="Swartzell S."/>
            <person name="Madan A."/>
            <person name="Mahairas G."/>
            <person name="Geary S.J."/>
        </authorList>
    </citation>
    <scope>NUCLEOTIDE SEQUENCE [LARGE SCALE GENOMIC DNA]</scope>
    <source>
        <strain>R(low / passage 15 / clone 2)</strain>
    </source>
</reference>